<sequence length="561" mass="63519">MSEEDIRAARLEKVEQLKQLGTNPYAYRWESTHHAAQLQEQFADLASGEEVDLEVAIAGRIMARRVFGKLAFFTLQDETGTIQLYLDKNRIQESMADIDADAFNHLKQLTDAGDILGVKGTIKRTEKGELSVYVKQYTILTKSLLPLPDKWHGLTDVAKRYRQRYVDLIVNPEVRQTFRRRAQITAGIRRYLEQRDFLEIETPVLQSEAGGADARPFITHHNTLEMELYLRIATELHLKRLIVGGFEKVFELGRIFRNEGISTRHNPEFTTIEVYQAYADYNDMMALTEGIITTVAQEVLGTLQITYQGEPIDLTPPWRRVTMHDLVKEFTGLDFNSFQTLEEAKTASKNAGIPGVDEAKSIGKLLNLAFEEKVEANLIQPTFVIDYPVEISPLAKPHRSQPGLVERFELFIVGRETGNSFSELTDPIDQRERLEAQAERKAAGDLEAQGVDEDFLTALEYGMPPTGGLGIGIDRLVMLLTDSASIRDVIAFPLLKPEGSVIKQFSYEQKTQTLTIEFDSGSVYEYFKVPPSVKEDLDNAPSKGQHFNKFIKGKFKFEQLS</sequence>
<comment type="catalytic activity">
    <reaction evidence="1">
        <text>tRNA(Lys) + L-lysine + ATP = L-lysyl-tRNA(Lys) + AMP + diphosphate</text>
        <dbReference type="Rhea" id="RHEA:20792"/>
        <dbReference type="Rhea" id="RHEA-COMP:9696"/>
        <dbReference type="Rhea" id="RHEA-COMP:9697"/>
        <dbReference type="ChEBI" id="CHEBI:30616"/>
        <dbReference type="ChEBI" id="CHEBI:32551"/>
        <dbReference type="ChEBI" id="CHEBI:33019"/>
        <dbReference type="ChEBI" id="CHEBI:78442"/>
        <dbReference type="ChEBI" id="CHEBI:78529"/>
        <dbReference type="ChEBI" id="CHEBI:456215"/>
        <dbReference type="EC" id="6.1.1.6"/>
    </reaction>
</comment>
<comment type="cofactor">
    <cofactor evidence="1">
        <name>Mg(2+)</name>
        <dbReference type="ChEBI" id="CHEBI:18420"/>
    </cofactor>
    <text evidence="1">Binds 3 Mg(2+) ions per subunit.</text>
</comment>
<comment type="subunit">
    <text evidence="1">Homodimer.</text>
</comment>
<comment type="subcellular location">
    <subcellularLocation>
        <location evidence="1">Cytoplasm</location>
    </subcellularLocation>
</comment>
<comment type="similarity">
    <text evidence="1">Belongs to the class-II aminoacyl-tRNA synthetase family.</text>
</comment>
<name>SYK_NOSP7</name>
<organism>
    <name type="scientific">Nostoc punctiforme (strain ATCC 29133 / PCC 73102)</name>
    <dbReference type="NCBI Taxonomy" id="63737"/>
    <lineage>
        <taxon>Bacteria</taxon>
        <taxon>Bacillati</taxon>
        <taxon>Cyanobacteriota</taxon>
        <taxon>Cyanophyceae</taxon>
        <taxon>Nostocales</taxon>
        <taxon>Nostocaceae</taxon>
        <taxon>Nostoc</taxon>
    </lineage>
</organism>
<feature type="chain" id="PRO_1000101130" description="Lysine--tRNA ligase">
    <location>
        <begin position="1"/>
        <end position="561"/>
    </location>
</feature>
<feature type="binding site" evidence="1">
    <location>
        <position position="409"/>
    </location>
    <ligand>
        <name>Mg(2+)</name>
        <dbReference type="ChEBI" id="CHEBI:18420"/>
        <label>1</label>
    </ligand>
</feature>
<feature type="binding site" evidence="1">
    <location>
        <position position="416"/>
    </location>
    <ligand>
        <name>Mg(2+)</name>
        <dbReference type="ChEBI" id="CHEBI:18420"/>
        <label>1</label>
    </ligand>
</feature>
<feature type="binding site" evidence="1">
    <location>
        <position position="416"/>
    </location>
    <ligand>
        <name>Mg(2+)</name>
        <dbReference type="ChEBI" id="CHEBI:18420"/>
        <label>2</label>
    </ligand>
</feature>
<keyword id="KW-0030">Aminoacyl-tRNA synthetase</keyword>
<keyword id="KW-0067">ATP-binding</keyword>
<keyword id="KW-0963">Cytoplasm</keyword>
<keyword id="KW-0436">Ligase</keyword>
<keyword id="KW-0460">Magnesium</keyword>
<keyword id="KW-0479">Metal-binding</keyword>
<keyword id="KW-0547">Nucleotide-binding</keyword>
<keyword id="KW-0648">Protein biosynthesis</keyword>
<keyword id="KW-1185">Reference proteome</keyword>
<evidence type="ECO:0000255" key="1">
    <source>
        <dbReference type="HAMAP-Rule" id="MF_00252"/>
    </source>
</evidence>
<gene>
    <name evidence="1" type="primary">lysS</name>
    <name type="ordered locus">Npun_R5202</name>
</gene>
<accession>B2J384</accession>
<reference key="1">
    <citation type="journal article" date="2013" name="Plant Physiol.">
        <title>A Nostoc punctiforme Sugar Transporter Necessary to Establish a Cyanobacterium-Plant Symbiosis.</title>
        <authorList>
            <person name="Ekman M."/>
            <person name="Picossi S."/>
            <person name="Campbell E.L."/>
            <person name="Meeks J.C."/>
            <person name="Flores E."/>
        </authorList>
    </citation>
    <scope>NUCLEOTIDE SEQUENCE [LARGE SCALE GENOMIC DNA]</scope>
    <source>
        <strain>ATCC 29133 / PCC 73102</strain>
    </source>
</reference>
<protein>
    <recommendedName>
        <fullName evidence="1">Lysine--tRNA ligase</fullName>
        <ecNumber evidence="1">6.1.1.6</ecNumber>
    </recommendedName>
    <alternativeName>
        <fullName evidence="1">Lysyl-tRNA synthetase</fullName>
        <shortName evidence="1">LysRS</shortName>
    </alternativeName>
</protein>
<proteinExistence type="inferred from homology"/>
<dbReference type="EC" id="6.1.1.6" evidence="1"/>
<dbReference type="EMBL" id="CP001037">
    <property type="protein sequence ID" value="ACC83534.1"/>
    <property type="molecule type" value="Genomic_DNA"/>
</dbReference>
<dbReference type="RefSeq" id="WP_012411486.1">
    <property type="nucleotide sequence ID" value="NC_010628.1"/>
</dbReference>
<dbReference type="SMR" id="B2J384"/>
<dbReference type="STRING" id="63737.Npun_R5202"/>
<dbReference type="EnsemblBacteria" id="ACC83534">
    <property type="protein sequence ID" value="ACC83534"/>
    <property type="gene ID" value="Npun_R5202"/>
</dbReference>
<dbReference type="KEGG" id="npu:Npun_R5202"/>
<dbReference type="eggNOG" id="COG1190">
    <property type="taxonomic scope" value="Bacteria"/>
</dbReference>
<dbReference type="HOGENOM" id="CLU_008255_6_0_3"/>
<dbReference type="OrthoDB" id="9802326at2"/>
<dbReference type="PhylomeDB" id="B2J384"/>
<dbReference type="Proteomes" id="UP000001191">
    <property type="component" value="Chromosome"/>
</dbReference>
<dbReference type="GO" id="GO:0005829">
    <property type="term" value="C:cytosol"/>
    <property type="evidence" value="ECO:0007669"/>
    <property type="project" value="TreeGrafter"/>
</dbReference>
<dbReference type="GO" id="GO:0005524">
    <property type="term" value="F:ATP binding"/>
    <property type="evidence" value="ECO:0007669"/>
    <property type="project" value="UniProtKB-UniRule"/>
</dbReference>
<dbReference type="GO" id="GO:0004824">
    <property type="term" value="F:lysine-tRNA ligase activity"/>
    <property type="evidence" value="ECO:0007669"/>
    <property type="project" value="UniProtKB-UniRule"/>
</dbReference>
<dbReference type="GO" id="GO:0000287">
    <property type="term" value="F:magnesium ion binding"/>
    <property type="evidence" value="ECO:0007669"/>
    <property type="project" value="UniProtKB-UniRule"/>
</dbReference>
<dbReference type="GO" id="GO:0000049">
    <property type="term" value="F:tRNA binding"/>
    <property type="evidence" value="ECO:0007669"/>
    <property type="project" value="TreeGrafter"/>
</dbReference>
<dbReference type="GO" id="GO:0006430">
    <property type="term" value="P:lysyl-tRNA aminoacylation"/>
    <property type="evidence" value="ECO:0007669"/>
    <property type="project" value="UniProtKB-UniRule"/>
</dbReference>
<dbReference type="CDD" id="cd00775">
    <property type="entry name" value="LysRS_core"/>
    <property type="match status" value="1"/>
</dbReference>
<dbReference type="CDD" id="cd04322">
    <property type="entry name" value="LysRS_N"/>
    <property type="match status" value="1"/>
</dbReference>
<dbReference type="FunFam" id="2.40.50.140:FF:000024">
    <property type="entry name" value="Lysine--tRNA ligase"/>
    <property type="match status" value="1"/>
</dbReference>
<dbReference type="FunFam" id="3.30.930.10:FF:000067">
    <property type="entry name" value="Lysine--tRNA ligase"/>
    <property type="match status" value="1"/>
</dbReference>
<dbReference type="Gene3D" id="3.30.930.10">
    <property type="entry name" value="Bira Bifunctional Protein, Domain 2"/>
    <property type="match status" value="1"/>
</dbReference>
<dbReference type="Gene3D" id="2.40.50.140">
    <property type="entry name" value="Nucleic acid-binding proteins"/>
    <property type="match status" value="1"/>
</dbReference>
<dbReference type="HAMAP" id="MF_00252">
    <property type="entry name" value="Lys_tRNA_synth_class2"/>
    <property type="match status" value="1"/>
</dbReference>
<dbReference type="InterPro" id="IPR004364">
    <property type="entry name" value="Aa-tRNA-synt_II"/>
</dbReference>
<dbReference type="InterPro" id="IPR006195">
    <property type="entry name" value="aa-tRNA-synth_II"/>
</dbReference>
<dbReference type="InterPro" id="IPR045864">
    <property type="entry name" value="aa-tRNA-synth_II/BPL/LPL"/>
</dbReference>
<dbReference type="InterPro" id="IPR025309">
    <property type="entry name" value="KTSC_dom"/>
</dbReference>
<dbReference type="InterPro" id="IPR002313">
    <property type="entry name" value="Lys-tRNA-ligase_II"/>
</dbReference>
<dbReference type="InterPro" id="IPR034762">
    <property type="entry name" value="Lys-tRNA-ligase_II_bac/euk"/>
</dbReference>
<dbReference type="InterPro" id="IPR044136">
    <property type="entry name" value="Lys-tRNA-ligase_II_N"/>
</dbReference>
<dbReference type="InterPro" id="IPR018149">
    <property type="entry name" value="Lys-tRNA-synth_II_C"/>
</dbReference>
<dbReference type="InterPro" id="IPR012340">
    <property type="entry name" value="NA-bd_OB-fold"/>
</dbReference>
<dbReference type="InterPro" id="IPR004365">
    <property type="entry name" value="NA-bd_OB_tRNA"/>
</dbReference>
<dbReference type="NCBIfam" id="TIGR00499">
    <property type="entry name" value="lysS_bact"/>
    <property type="match status" value="1"/>
</dbReference>
<dbReference type="NCBIfam" id="NF001756">
    <property type="entry name" value="PRK00484.1"/>
    <property type="match status" value="1"/>
</dbReference>
<dbReference type="PANTHER" id="PTHR42918:SF15">
    <property type="entry name" value="LYSINE--TRNA LIGASE, CHLOROPLASTIC_MITOCHONDRIAL"/>
    <property type="match status" value="1"/>
</dbReference>
<dbReference type="PANTHER" id="PTHR42918">
    <property type="entry name" value="LYSYL-TRNA SYNTHETASE"/>
    <property type="match status" value="1"/>
</dbReference>
<dbReference type="Pfam" id="PF13619">
    <property type="entry name" value="KTSC"/>
    <property type="match status" value="1"/>
</dbReference>
<dbReference type="Pfam" id="PF00152">
    <property type="entry name" value="tRNA-synt_2"/>
    <property type="match status" value="1"/>
</dbReference>
<dbReference type="Pfam" id="PF01336">
    <property type="entry name" value="tRNA_anti-codon"/>
    <property type="match status" value="1"/>
</dbReference>
<dbReference type="PIRSF" id="PIRSF039101">
    <property type="entry name" value="LysRS2"/>
    <property type="match status" value="1"/>
</dbReference>
<dbReference type="PRINTS" id="PR00982">
    <property type="entry name" value="TRNASYNTHLYS"/>
</dbReference>
<dbReference type="SUPFAM" id="SSF55681">
    <property type="entry name" value="Class II aaRS and biotin synthetases"/>
    <property type="match status" value="1"/>
</dbReference>
<dbReference type="SUPFAM" id="SSF50249">
    <property type="entry name" value="Nucleic acid-binding proteins"/>
    <property type="match status" value="1"/>
</dbReference>
<dbReference type="PROSITE" id="PS50862">
    <property type="entry name" value="AA_TRNA_LIGASE_II"/>
    <property type="match status" value="1"/>
</dbReference>